<name>IL17B_HUMAN</name>
<dbReference type="EMBL" id="AF184969">
    <property type="protein sequence ID" value="AAF01318.1"/>
    <property type="molecule type" value="mRNA"/>
</dbReference>
<dbReference type="EMBL" id="AF212311">
    <property type="protein sequence ID" value="AAF78775.1"/>
    <property type="molecule type" value="mRNA"/>
</dbReference>
<dbReference type="EMBL" id="AF152098">
    <property type="protein sequence ID" value="AAF28104.1"/>
    <property type="molecule type" value="mRNA"/>
</dbReference>
<dbReference type="EMBL" id="AF218727">
    <property type="protein sequence ID" value="AAG44136.1"/>
    <property type="molecule type" value="mRNA"/>
</dbReference>
<dbReference type="EMBL" id="AF110385">
    <property type="protein sequence ID" value="AAG39637.1"/>
    <property type="molecule type" value="mRNA"/>
</dbReference>
<dbReference type="EMBL" id="AY358931">
    <property type="protein sequence ID" value="AAQ89290.1"/>
    <property type="molecule type" value="mRNA"/>
</dbReference>
<dbReference type="EMBL" id="AF386077">
    <property type="protein sequence ID" value="AAK60336.1"/>
    <property type="molecule type" value="Genomic_DNA"/>
</dbReference>
<dbReference type="EMBL" id="BC113925">
    <property type="protein sequence ID" value="AAI13926.1"/>
    <property type="molecule type" value="mRNA"/>
</dbReference>
<dbReference type="EMBL" id="BC113946">
    <property type="protein sequence ID" value="AAI13947.1"/>
    <property type="molecule type" value="mRNA"/>
</dbReference>
<dbReference type="CCDS" id="CCDS4297.1"/>
<dbReference type="RefSeq" id="NP_001304916.1">
    <property type="nucleotide sequence ID" value="NM_001317987.1"/>
</dbReference>
<dbReference type="RefSeq" id="NP_055258.1">
    <property type="nucleotide sequence ID" value="NM_014443.3"/>
</dbReference>
<dbReference type="SMR" id="Q9UHF5"/>
<dbReference type="BioGRID" id="118065">
    <property type="interactions" value="87"/>
</dbReference>
<dbReference type="ComplexPortal" id="CPX-9206">
    <property type="entry name" value="Interleukin-17B receptor-ligand complex"/>
</dbReference>
<dbReference type="ComplexPortal" id="CPX-9302">
    <property type="entry name" value="Interleukin-17B complex"/>
</dbReference>
<dbReference type="FunCoup" id="Q9UHF5">
    <property type="interactions" value="359"/>
</dbReference>
<dbReference type="IntAct" id="Q9UHF5">
    <property type="interactions" value="74"/>
</dbReference>
<dbReference type="STRING" id="9606.ENSP00000261796"/>
<dbReference type="GlyCosmos" id="Q9UHF5">
    <property type="glycosylation" value="1 site, No reported glycans"/>
</dbReference>
<dbReference type="GlyGen" id="Q9UHF5">
    <property type="glycosylation" value="1 site"/>
</dbReference>
<dbReference type="BioMuta" id="IL17B"/>
<dbReference type="DMDM" id="20143877"/>
<dbReference type="MassIVE" id="Q9UHF5"/>
<dbReference type="PaxDb" id="9606-ENSP00000261796"/>
<dbReference type="PeptideAtlas" id="Q9UHF5"/>
<dbReference type="ProteomicsDB" id="84343"/>
<dbReference type="Antibodypedia" id="27818">
    <property type="antibodies" value="459 antibodies from 32 providers"/>
</dbReference>
<dbReference type="DNASU" id="27190"/>
<dbReference type="Ensembl" id="ENST00000261796.4">
    <property type="protein sequence ID" value="ENSP00000261796.3"/>
    <property type="gene ID" value="ENSG00000127743.6"/>
</dbReference>
<dbReference type="GeneID" id="27190"/>
<dbReference type="KEGG" id="hsa:27190"/>
<dbReference type="MANE-Select" id="ENST00000261796.4">
    <property type="protein sequence ID" value="ENSP00000261796.3"/>
    <property type="RefSeq nucleotide sequence ID" value="NM_014443.3"/>
    <property type="RefSeq protein sequence ID" value="NP_055258.1"/>
</dbReference>
<dbReference type="UCSC" id="uc003lqo.4">
    <property type="organism name" value="human"/>
</dbReference>
<dbReference type="AGR" id="HGNC:5982"/>
<dbReference type="CTD" id="27190"/>
<dbReference type="DisGeNET" id="27190"/>
<dbReference type="GeneCards" id="IL17B"/>
<dbReference type="HGNC" id="HGNC:5982">
    <property type="gene designation" value="IL17B"/>
</dbReference>
<dbReference type="HPA" id="ENSG00000127743">
    <property type="expression patterns" value="Low tissue specificity"/>
</dbReference>
<dbReference type="MIM" id="604627">
    <property type="type" value="gene"/>
</dbReference>
<dbReference type="neXtProt" id="NX_Q9UHF5"/>
<dbReference type="OpenTargets" id="ENSG00000127743"/>
<dbReference type="PharmGKB" id="PA29795"/>
<dbReference type="VEuPathDB" id="HostDB:ENSG00000127743"/>
<dbReference type="eggNOG" id="ENOG502S074">
    <property type="taxonomic scope" value="Eukaryota"/>
</dbReference>
<dbReference type="GeneTree" id="ENSGT00940000160854"/>
<dbReference type="HOGENOM" id="CLU_100619_1_0_1"/>
<dbReference type="InParanoid" id="Q9UHF5"/>
<dbReference type="OMA" id="WPHNLLL"/>
<dbReference type="OrthoDB" id="9896444at2759"/>
<dbReference type="PAN-GO" id="Q9UHF5">
    <property type="GO annotations" value="0 GO annotations based on evolutionary models"/>
</dbReference>
<dbReference type="PhylomeDB" id="Q9UHF5"/>
<dbReference type="TreeFam" id="TF314701"/>
<dbReference type="PathwayCommons" id="Q9UHF5"/>
<dbReference type="SignaLink" id="Q9UHF5"/>
<dbReference type="SIGNOR" id="Q9UHF5"/>
<dbReference type="BioGRID-ORCS" id="27190">
    <property type="hits" value="11 hits in 1144 CRISPR screens"/>
</dbReference>
<dbReference type="GenomeRNAi" id="27190"/>
<dbReference type="Pharos" id="Q9UHF5">
    <property type="development level" value="Tbio"/>
</dbReference>
<dbReference type="PRO" id="PR:Q9UHF5"/>
<dbReference type="Proteomes" id="UP000005640">
    <property type="component" value="Chromosome 5"/>
</dbReference>
<dbReference type="RNAct" id="Q9UHF5">
    <property type="molecule type" value="protein"/>
</dbReference>
<dbReference type="Bgee" id="ENSG00000127743">
    <property type="expression patterns" value="Expressed in tibia and 109 other cell types or tissues"/>
</dbReference>
<dbReference type="GO" id="GO:0005615">
    <property type="term" value="C:extracellular space"/>
    <property type="evidence" value="ECO:0007669"/>
    <property type="project" value="UniProtKB-KW"/>
</dbReference>
<dbReference type="GO" id="GO:0005125">
    <property type="term" value="F:cytokine activity"/>
    <property type="evidence" value="ECO:0000304"/>
    <property type="project" value="ProtInc"/>
</dbReference>
<dbReference type="GO" id="GO:0007267">
    <property type="term" value="P:cell-cell signaling"/>
    <property type="evidence" value="ECO:0000304"/>
    <property type="project" value="ProtInc"/>
</dbReference>
<dbReference type="GO" id="GO:0006955">
    <property type="term" value="P:immune response"/>
    <property type="evidence" value="ECO:0000304"/>
    <property type="project" value="ProtInc"/>
</dbReference>
<dbReference type="GO" id="GO:0006954">
    <property type="term" value="P:inflammatory response"/>
    <property type="evidence" value="ECO:0007669"/>
    <property type="project" value="InterPro"/>
</dbReference>
<dbReference type="GO" id="GO:1900017">
    <property type="term" value="P:positive regulation of cytokine production involved in inflammatory response"/>
    <property type="evidence" value="ECO:0007669"/>
    <property type="project" value="Ensembl"/>
</dbReference>
<dbReference type="FunFam" id="2.10.90.10:FF:000034">
    <property type="entry name" value="Interleukin 17B"/>
    <property type="match status" value="1"/>
</dbReference>
<dbReference type="Gene3D" id="2.10.90.10">
    <property type="entry name" value="Cystine-knot cytokines"/>
    <property type="match status" value="1"/>
</dbReference>
<dbReference type="InterPro" id="IPR029034">
    <property type="entry name" value="Cystine-knot_cytokine"/>
</dbReference>
<dbReference type="InterPro" id="IPR020440">
    <property type="entry name" value="IL-17_chr"/>
</dbReference>
<dbReference type="InterPro" id="IPR010345">
    <property type="entry name" value="IL-17_fam"/>
</dbReference>
<dbReference type="Pfam" id="PF06083">
    <property type="entry name" value="IL17"/>
    <property type="match status" value="1"/>
</dbReference>
<dbReference type="PRINTS" id="PR01932">
    <property type="entry name" value="INTRLEUKIN17"/>
</dbReference>
<dbReference type="SUPFAM" id="SSF57501">
    <property type="entry name" value="Cystine-knot cytokines"/>
    <property type="match status" value="1"/>
</dbReference>
<reference key="1">
    <citation type="submission" date="1999-09" db="EMBL/GenBank/DDBJ databases">
        <authorList>
            <person name="Presnell S."/>
            <person name="Gilbert T."/>
            <person name="Whitmore T."/>
            <person name="Foster D."/>
            <person name="Hart C."/>
            <person name="Lehner J."/>
            <person name="Martinez T."/>
            <person name="Hoffman R."/>
            <person name="O'Hara P."/>
        </authorList>
    </citation>
    <scope>NUCLEOTIDE SEQUENCE [MRNA]</scope>
</reference>
<reference key="2">
    <citation type="journal article" date="2000" name="J. Biol. Chem.">
        <title>A novel cytokine receptor-ligand pair. Identification, molecular characterization, and in vivo immunomodulatory activity.</title>
        <authorList>
            <person name="Shi Y."/>
            <person name="Ullrich S.J."/>
            <person name="Zhang J."/>
            <person name="Connolly K."/>
            <person name="Grzegorzewski K.J."/>
            <person name="Barber M.C."/>
            <person name="Wang W."/>
            <person name="Wathen K."/>
            <person name="Hodge V."/>
            <person name="Fisher C.L."/>
            <person name="Olsen H."/>
            <person name="Ruben S.M."/>
            <person name="Knyazev I."/>
            <person name="Cho Y.H."/>
            <person name="Kao V."/>
            <person name="Wilkinson K.A."/>
            <person name="Carrell J.A."/>
            <person name="Ebner R."/>
        </authorList>
    </citation>
    <scope>NUCLEOTIDE SEQUENCE [MRNA]</scope>
</reference>
<reference key="3">
    <citation type="journal article" date="2000" name="Proc. Natl. Acad. Sci. U.S.A.">
        <title>Cloning and characterization of IL-17B and IL-17C, two new members of the IL-17 cytokine family.</title>
        <authorList>
            <person name="Li H."/>
            <person name="Chen J."/>
            <person name="Huang A."/>
            <person name="Stinson J."/>
            <person name="Heldens S."/>
            <person name="Foster J."/>
            <person name="Dowd P."/>
            <person name="Gurney A.L."/>
            <person name="Wood W.I."/>
        </authorList>
    </citation>
    <scope>NUCLEOTIDE SEQUENCE [MRNA]</scope>
</reference>
<reference key="4">
    <citation type="submission" date="1999-12" db="EMBL/GenBank/DDBJ databases">
        <title>Identification of a novel IL-17 related factor: demonstration of neuronal expression and evaluation as a candidate for the chromosome 5q-linked form of Charcot-Marie-Tooth disease.</title>
        <authorList>
            <person name="Moore E.E."/>
            <person name="Presnell S."/>
            <person name="Garrigues U."/>
            <person name="Guilbot A."/>
            <person name="LeGuern E."/>
            <person name="Smith D."/>
            <person name="Yao L."/>
            <person name="Whitmore T.E."/>
            <person name="Gilbert T."/>
            <person name="Kuestner R.E."/>
        </authorList>
    </citation>
    <scope>NUCLEOTIDE SEQUENCE [MRNA]</scope>
</reference>
<reference key="5">
    <citation type="submission" date="1998-12" db="EMBL/GenBank/DDBJ databases">
        <title>Novel cytokine homology with interleukin-17.</title>
        <authorList>
            <person name="Zhang W."/>
            <person name="Wang J."/>
            <person name="Cao X."/>
        </authorList>
    </citation>
    <scope>NUCLEOTIDE SEQUENCE [MRNA]</scope>
</reference>
<reference key="6">
    <citation type="journal article" date="2003" name="Genome Res.">
        <title>The secreted protein discovery initiative (SPDI), a large-scale effort to identify novel human secreted and transmembrane proteins: a bioinformatics assessment.</title>
        <authorList>
            <person name="Clark H.F."/>
            <person name="Gurney A.L."/>
            <person name="Abaya E."/>
            <person name="Baker K."/>
            <person name="Baldwin D.T."/>
            <person name="Brush J."/>
            <person name="Chen J."/>
            <person name="Chow B."/>
            <person name="Chui C."/>
            <person name="Crowley C."/>
            <person name="Currell B."/>
            <person name="Deuel B."/>
            <person name="Dowd P."/>
            <person name="Eaton D."/>
            <person name="Foster J.S."/>
            <person name="Grimaldi C."/>
            <person name="Gu Q."/>
            <person name="Hass P.E."/>
            <person name="Heldens S."/>
            <person name="Huang A."/>
            <person name="Kim H.S."/>
            <person name="Klimowski L."/>
            <person name="Jin Y."/>
            <person name="Johnson S."/>
            <person name="Lee J."/>
            <person name="Lewis L."/>
            <person name="Liao D."/>
            <person name="Mark M.R."/>
            <person name="Robbie E."/>
            <person name="Sanchez C."/>
            <person name="Schoenfeld J."/>
            <person name="Seshagiri S."/>
            <person name="Simmons L."/>
            <person name="Singh J."/>
            <person name="Smith V."/>
            <person name="Stinson J."/>
            <person name="Vagts A."/>
            <person name="Vandlen R.L."/>
            <person name="Watanabe C."/>
            <person name="Wieand D."/>
            <person name="Woods K."/>
            <person name="Xie M.-H."/>
            <person name="Yansura D.G."/>
            <person name="Yi S."/>
            <person name="Yu G."/>
            <person name="Yuan J."/>
            <person name="Zhang M."/>
            <person name="Zhang Z."/>
            <person name="Goddard A.D."/>
            <person name="Wood W.I."/>
            <person name="Godowski P.J."/>
            <person name="Gray A.M."/>
        </authorList>
    </citation>
    <scope>NUCLEOTIDE SEQUENCE [LARGE SCALE MRNA]</scope>
</reference>
<reference key="7">
    <citation type="submission" date="2001-06" db="EMBL/GenBank/DDBJ databases">
        <authorList>
            <consortium name="SeattleSNPs variation discovery resource"/>
        </authorList>
    </citation>
    <scope>NUCLEOTIDE SEQUENCE [GENOMIC DNA]</scope>
</reference>
<reference key="8">
    <citation type="journal article" date="2004" name="Genome Res.">
        <title>The status, quality, and expansion of the NIH full-length cDNA project: the Mammalian Gene Collection (MGC).</title>
        <authorList>
            <consortium name="The MGC Project Team"/>
        </authorList>
    </citation>
    <scope>NUCLEOTIDE SEQUENCE [LARGE SCALE MRNA]</scope>
</reference>
<comment type="function">
    <text>Stimulates the release of tumor necrosis factor alpha and IL-1-beta from the monocytic cell line THP-1.</text>
</comment>
<comment type="subcellular location">
    <subcellularLocation>
        <location>Secreted</location>
    </subcellularLocation>
</comment>
<comment type="tissue specificity">
    <text>Expressed in adult pancreas, small intestine, stomach, spinal cord and testis. Less pronounced expression in prostate, colon mucosal lining, and ovary.</text>
</comment>
<comment type="similarity">
    <text evidence="4">Belongs to the IL-17 family.</text>
</comment>
<comment type="online information" name="Wikipedia">
    <link uri="https://en.wikipedia.org/wiki/Interleukin_17"/>
    <text>Interleukin-17 entry</text>
</comment>
<gene>
    <name type="primary">IL17B</name>
    <name type="synonym">IL20</name>
    <name type="synonym">NIRF</name>
    <name type="synonym">ZCYTO7</name>
    <name type="ORF">UNQ516/PRO1031</name>
</gene>
<feature type="signal peptide" evidence="2">
    <location>
        <begin position="1"/>
        <end position="20"/>
    </location>
</feature>
<feature type="chain" id="PRO_0000015426" description="Interleukin-17B">
    <location>
        <begin position="21"/>
        <end position="180"/>
    </location>
</feature>
<feature type="region of interest" description="Disordered" evidence="3">
    <location>
        <begin position="22"/>
        <end position="44"/>
    </location>
</feature>
<feature type="glycosylation site" description="N-linked (GlcNAc...) asparagine" evidence="2">
    <location>
        <position position="75"/>
    </location>
</feature>
<feature type="disulfide bond" evidence="1">
    <location>
        <begin position="121"/>
        <end position="176"/>
    </location>
</feature>
<feature type="disulfide bond" evidence="1">
    <location>
        <begin position="126"/>
        <end position="178"/>
    </location>
</feature>
<accession>Q9UHF5</accession>
<accession>Q14CE5</accession>
<sequence length="180" mass="20437">MDWPHNLLFLLTISIFLGLGQPRSPKSKRKGQGRPGPLAPGPHQVPLDLVSRMKPYARMEEYERNIEEMVAQLRNSSELAQRKCEVNLQLWMSNKRSLSPWGYSINHDPSRIPVDLPEARCLCLGCVNPFTMQEDRSMVSVPVFSQVPVRRRLCPPPPRTGPCRQRAVMETIAVGCTCIF</sequence>
<evidence type="ECO:0000250" key="1"/>
<evidence type="ECO:0000255" key="2"/>
<evidence type="ECO:0000256" key="3">
    <source>
        <dbReference type="SAM" id="MobiDB-lite"/>
    </source>
</evidence>
<evidence type="ECO:0000305" key="4"/>
<proteinExistence type="evidence at protein level"/>
<protein>
    <recommendedName>
        <fullName>Interleukin-17B</fullName>
        <shortName>IL-17B</shortName>
    </recommendedName>
    <alternativeName>
        <fullName>Cytokine Zcyto7</fullName>
    </alternativeName>
    <alternativeName>
        <fullName>Interleukin-20</fullName>
        <shortName>IL-20</shortName>
    </alternativeName>
    <alternativeName>
        <fullName>Neuronal interleukin-17-related factor</fullName>
    </alternativeName>
</protein>
<organism>
    <name type="scientific">Homo sapiens</name>
    <name type="common">Human</name>
    <dbReference type="NCBI Taxonomy" id="9606"/>
    <lineage>
        <taxon>Eukaryota</taxon>
        <taxon>Metazoa</taxon>
        <taxon>Chordata</taxon>
        <taxon>Craniata</taxon>
        <taxon>Vertebrata</taxon>
        <taxon>Euteleostomi</taxon>
        <taxon>Mammalia</taxon>
        <taxon>Eutheria</taxon>
        <taxon>Euarchontoglires</taxon>
        <taxon>Primates</taxon>
        <taxon>Haplorrhini</taxon>
        <taxon>Catarrhini</taxon>
        <taxon>Hominidae</taxon>
        <taxon>Homo</taxon>
    </lineage>
</organism>
<keyword id="KW-0202">Cytokine</keyword>
<keyword id="KW-1015">Disulfide bond</keyword>
<keyword id="KW-0325">Glycoprotein</keyword>
<keyword id="KW-1267">Proteomics identification</keyword>
<keyword id="KW-1185">Reference proteome</keyword>
<keyword id="KW-0964">Secreted</keyword>
<keyword id="KW-0732">Signal</keyword>